<keyword id="KW-1003">Cell membrane</keyword>
<keyword id="KW-0328">Glycosyltransferase</keyword>
<keyword id="KW-0444">Lipid biosynthesis</keyword>
<keyword id="KW-0443">Lipid metabolism</keyword>
<keyword id="KW-0460">Magnesium</keyword>
<keyword id="KW-0472">Membrane</keyword>
<keyword id="KW-0594">Phospholipid biosynthesis</keyword>
<keyword id="KW-1208">Phospholipid metabolism</keyword>
<keyword id="KW-1185">Reference proteome</keyword>
<keyword id="KW-0808">Transferase</keyword>
<name>PIMA_MYCBO</name>
<comment type="function">
    <text evidence="1">Involved in the biosynthesis of phosphatidyl-myo-inositol mannosides (PIM) which are early precursors in the biosynthesis of lipomannans (LM) and lipoarabinomannans (LAM). Catalyzes the addition of a mannosyl residue from GDP-D-mannose (GDP-Man) to the position 2 of the carrier lipid phosphatidyl-myo-inositol (PI) to generate a phosphatidyl-myo-inositol bearing an alpha-1,2-linked mannose residue (PIM1).</text>
</comment>
<comment type="catalytic activity">
    <reaction evidence="1">
        <text>a 1,2-diacyl-sn-glycero-3-phospho-(1D-myo-inositol) + GDP-alpha-D-mannose = a 1,2-diacyl-sn-glycero-3-phospho-[alpha-D-mannopyranosyl-(1&lt;-&gt;6)-D-myo-inositol] + GDP + H(+)</text>
        <dbReference type="Rhea" id="RHEA:47368"/>
        <dbReference type="ChEBI" id="CHEBI:15378"/>
        <dbReference type="ChEBI" id="CHEBI:57527"/>
        <dbReference type="ChEBI" id="CHEBI:57880"/>
        <dbReference type="ChEBI" id="CHEBI:58189"/>
        <dbReference type="ChEBI" id="CHEBI:87673"/>
        <dbReference type="EC" id="2.4.1.345"/>
    </reaction>
</comment>
<comment type="cofactor">
    <cofactor evidence="2">
        <name>Mg(2+)</name>
        <dbReference type="ChEBI" id="CHEBI:18420"/>
    </cofactor>
</comment>
<comment type="pathway">
    <text evidence="1">Phospholipid metabolism; phosphatidylinositol metabolism.</text>
</comment>
<comment type="subunit">
    <text evidence="1">Monomer.</text>
</comment>
<comment type="subcellular location">
    <subcellularLocation>
        <location evidence="1">Cell membrane</location>
        <topology evidence="1">Peripheral membrane protein</topology>
        <orientation evidence="1">Cytoplasmic side</orientation>
    </subcellularLocation>
</comment>
<comment type="similarity">
    <text evidence="3">Belongs to the glycosyltransferase group 1 family.</text>
</comment>
<protein>
    <recommendedName>
        <fullName evidence="1">Phosphatidyl-myo-inositol mannosyltransferase</fullName>
        <ecNumber evidence="1">2.4.1.345</ecNumber>
    </recommendedName>
    <alternativeName>
        <fullName evidence="1">Alpha-mannosyltransferase</fullName>
    </alternativeName>
    <alternativeName>
        <fullName evidence="1">GDP-mannose-dependent alpha-(1-2)-phosphatidylinositol mannosyltransferase</fullName>
    </alternativeName>
    <alternativeName>
        <fullName evidence="3">Guanosine diphosphomannose-phosphatidyl-inositol alpha-mannosyltransferase</fullName>
    </alternativeName>
    <alternativeName>
        <fullName evidence="1">Phosphatidylinositol alpha-mannosyltransferase</fullName>
        <shortName evidence="1">PI alpha-mannosyltransferase</shortName>
    </alternativeName>
</protein>
<reference key="1">
    <citation type="journal article" date="2003" name="Proc. Natl. Acad. Sci. U.S.A.">
        <title>The complete genome sequence of Mycobacterium bovis.</title>
        <authorList>
            <person name="Garnier T."/>
            <person name="Eiglmeier K."/>
            <person name="Camus J.-C."/>
            <person name="Medina N."/>
            <person name="Mansoor H."/>
            <person name="Pryor M."/>
            <person name="Duthoy S."/>
            <person name="Grondin S."/>
            <person name="Lacroix C."/>
            <person name="Monsempe C."/>
            <person name="Simon S."/>
            <person name="Harris B."/>
            <person name="Atkin R."/>
            <person name="Doggett J."/>
            <person name="Mayes R."/>
            <person name="Keating L."/>
            <person name="Wheeler P.R."/>
            <person name="Parkhill J."/>
            <person name="Barrell B.G."/>
            <person name="Cole S.T."/>
            <person name="Gordon S.V."/>
            <person name="Hewinson R.G."/>
        </authorList>
    </citation>
    <scope>NUCLEOTIDE SEQUENCE [LARGE SCALE GENOMIC DNA]</scope>
    <source>
        <strain>ATCC BAA-935 / AF2122/97</strain>
    </source>
</reference>
<reference key="2">
    <citation type="journal article" date="2017" name="Genome Announc.">
        <title>Updated reference genome sequence and annotation of Mycobacterium bovis AF2122/97.</title>
        <authorList>
            <person name="Malone K.M."/>
            <person name="Farrell D."/>
            <person name="Stuber T.P."/>
            <person name="Schubert O.T."/>
            <person name="Aebersold R."/>
            <person name="Robbe-Austerman S."/>
            <person name="Gordon S.V."/>
        </authorList>
    </citation>
    <scope>NUCLEOTIDE SEQUENCE [LARGE SCALE GENOMIC DNA]</scope>
    <scope>GENOME REANNOTATION</scope>
    <source>
        <strain>ATCC BAA-935 / AF2122/97</strain>
    </source>
</reference>
<gene>
    <name evidence="1" type="primary">pimA</name>
    <name type="ordered locus">BQ2027_MB2642C</name>
</gene>
<evidence type="ECO:0000250" key="1">
    <source>
        <dbReference type="UniProtKB" id="A0QWG6"/>
    </source>
</evidence>
<evidence type="ECO:0000250" key="2">
    <source>
        <dbReference type="UniProtKB" id="P9WMZ5"/>
    </source>
</evidence>
<evidence type="ECO:0000305" key="3"/>
<sequence length="378" mass="40445">MRIGMICPYSFDVPGGVQSHVLQLAEVMRTRGHLVSVLAPASPHAALPDYFVSGGRAVPIPYNGSVARLRFGPATHRKVKKWLAHGDFDVLHLHEPNAPSLSMLALNIAEGPIVATFHTSTTKSLTLTVFQGILRPMHEKIVGRIAVSDLARRWQMEALGSDAVEIPNGVDVDSFASAARLDGYPRQGKTVLFLGRYDEPRKGMAVLLDALPKVVQRFPDVQLLIVGHGDADQLRGQAGRLAAHLRFLGQVDDAGKASAMRSADVYCAPNTGGESFGIVLVEAMAAGTAVVASDLDAFRRVLRDGEVGHLVPVDPPDLQAAALADGLIAVLENDVLRERYVAAGNAAVRRYDWSVVASQIMRVYETVAGSGAKVQVAS</sequence>
<dbReference type="EC" id="2.4.1.345" evidence="1"/>
<dbReference type="EMBL" id="LT708304">
    <property type="protein sequence ID" value="SIU01260.1"/>
    <property type="molecule type" value="Genomic_DNA"/>
</dbReference>
<dbReference type="RefSeq" id="NP_856288.1">
    <property type="nucleotide sequence ID" value="NC_002945.3"/>
</dbReference>
<dbReference type="RefSeq" id="WP_003413478.1">
    <property type="nucleotide sequence ID" value="NC_002945.4"/>
</dbReference>
<dbReference type="SMR" id="Q7TY88"/>
<dbReference type="GeneID" id="45426613"/>
<dbReference type="KEGG" id="mbo:BQ2027_MB2642C"/>
<dbReference type="PATRIC" id="fig|233413.5.peg.2903"/>
<dbReference type="UniPathway" id="UPA00949"/>
<dbReference type="Proteomes" id="UP000001419">
    <property type="component" value="Chromosome"/>
</dbReference>
<dbReference type="GO" id="GO:0005886">
    <property type="term" value="C:plasma membrane"/>
    <property type="evidence" value="ECO:0007669"/>
    <property type="project" value="UniProtKB-SubCell"/>
</dbReference>
<dbReference type="GO" id="GO:0004377">
    <property type="term" value="F:GDP-Man:Man3GlcNAc2-PP-Dol alpha-1,2-mannosyltransferase activity"/>
    <property type="evidence" value="ECO:0000250"/>
    <property type="project" value="UniProtKB"/>
</dbReference>
<dbReference type="GO" id="GO:0043750">
    <property type="term" value="F:phosphatidylinositol alpha-mannosyltransferase activity"/>
    <property type="evidence" value="ECO:0000250"/>
    <property type="project" value="UniProtKB"/>
</dbReference>
<dbReference type="GO" id="GO:0009247">
    <property type="term" value="P:glycolipid biosynthetic process"/>
    <property type="evidence" value="ECO:0000250"/>
    <property type="project" value="UniProtKB"/>
</dbReference>
<dbReference type="GO" id="GO:0046488">
    <property type="term" value="P:phosphatidylinositol metabolic process"/>
    <property type="evidence" value="ECO:0000250"/>
    <property type="project" value="UniProtKB"/>
</dbReference>
<dbReference type="GO" id="GO:0008654">
    <property type="term" value="P:phospholipid biosynthetic process"/>
    <property type="evidence" value="ECO:0007669"/>
    <property type="project" value="UniProtKB-KW"/>
</dbReference>
<dbReference type="CDD" id="cd03801">
    <property type="entry name" value="GT4_PimA-like"/>
    <property type="match status" value="1"/>
</dbReference>
<dbReference type="FunFam" id="3.40.50.2000:FF:000207">
    <property type="entry name" value="Phosphatidyl-myo-inositol mannosyltransferase"/>
    <property type="match status" value="1"/>
</dbReference>
<dbReference type="Gene3D" id="3.40.50.2000">
    <property type="entry name" value="Glycogen Phosphorylase B"/>
    <property type="match status" value="2"/>
</dbReference>
<dbReference type="InterPro" id="IPR028098">
    <property type="entry name" value="Glyco_trans_4-like_N"/>
</dbReference>
<dbReference type="InterPro" id="IPR050194">
    <property type="entry name" value="Glycosyltransferase_grp1"/>
</dbReference>
<dbReference type="PANTHER" id="PTHR45947">
    <property type="entry name" value="SULFOQUINOVOSYL TRANSFERASE SQD2"/>
    <property type="match status" value="1"/>
</dbReference>
<dbReference type="PANTHER" id="PTHR45947:SF3">
    <property type="entry name" value="SULFOQUINOVOSYL TRANSFERASE SQD2"/>
    <property type="match status" value="1"/>
</dbReference>
<dbReference type="Pfam" id="PF13692">
    <property type="entry name" value="Glyco_trans_1_4"/>
    <property type="match status" value="1"/>
</dbReference>
<dbReference type="Pfam" id="PF13439">
    <property type="entry name" value="Glyco_transf_4"/>
    <property type="match status" value="1"/>
</dbReference>
<dbReference type="SUPFAM" id="SSF53756">
    <property type="entry name" value="UDP-Glycosyltransferase/glycogen phosphorylase"/>
    <property type="match status" value="1"/>
</dbReference>
<feature type="chain" id="PRO_0000080300" description="Phosphatidyl-myo-inositol mannosyltransferase">
    <location>
        <begin position="1"/>
        <end position="378"/>
    </location>
</feature>
<feature type="binding site" evidence="1">
    <location>
        <position position="9"/>
    </location>
    <ligand>
        <name>GDP-alpha-D-mannose</name>
        <dbReference type="ChEBI" id="CHEBI:57527"/>
    </ligand>
</feature>
<feature type="binding site" evidence="1">
    <location>
        <position position="16"/>
    </location>
    <ligand>
        <name>GDP-alpha-D-mannose</name>
        <dbReference type="ChEBI" id="CHEBI:57527"/>
    </ligand>
</feature>
<feature type="binding site" evidence="1">
    <location>
        <position position="18"/>
    </location>
    <ligand>
        <name>a 1,2-diacyl-sn-glycero-3-phospho-(1D-myo-inositol)</name>
        <dbReference type="ChEBI" id="CHEBI:57880"/>
    </ligand>
</feature>
<feature type="binding site" evidence="1">
    <location>
        <begin position="62"/>
        <end position="63"/>
    </location>
    <ligand>
        <name>a 1,2-diacyl-sn-glycero-3-phospho-(1D-myo-inositol)</name>
        <dbReference type="ChEBI" id="CHEBI:57880"/>
    </ligand>
</feature>
<feature type="binding site" evidence="1">
    <location>
        <position position="68"/>
    </location>
    <ligand>
        <name>a 1,2-diacyl-sn-glycero-3-phospho-(1D-myo-inositol)</name>
        <dbReference type="ChEBI" id="CHEBI:57880"/>
    </ligand>
</feature>
<feature type="binding site" evidence="1">
    <location>
        <position position="196"/>
    </location>
    <ligand>
        <name>GDP-alpha-D-mannose</name>
        <dbReference type="ChEBI" id="CHEBI:57527"/>
    </ligand>
</feature>
<feature type="binding site" evidence="1">
    <location>
        <begin position="201"/>
        <end position="202"/>
    </location>
    <ligand>
        <name>GDP-alpha-D-mannose</name>
        <dbReference type="ChEBI" id="CHEBI:57527"/>
    </ligand>
</feature>
<feature type="binding site" evidence="1">
    <location>
        <begin position="251"/>
        <end position="253"/>
    </location>
    <ligand>
        <name>GDP-alpha-D-mannose</name>
        <dbReference type="ChEBI" id="CHEBI:57527"/>
    </ligand>
</feature>
<feature type="binding site" evidence="1">
    <location>
        <position position="256"/>
    </location>
    <ligand>
        <name>GDP-alpha-D-mannose</name>
        <dbReference type="ChEBI" id="CHEBI:57527"/>
    </ligand>
</feature>
<feature type="binding site" evidence="1">
    <location>
        <begin position="274"/>
        <end position="278"/>
    </location>
    <ligand>
        <name>GDP-alpha-D-mannose</name>
        <dbReference type="ChEBI" id="CHEBI:57527"/>
    </ligand>
</feature>
<feature type="binding site" evidence="1">
    <location>
        <position position="282"/>
    </location>
    <ligand>
        <name>GDP-alpha-D-mannose</name>
        <dbReference type="ChEBI" id="CHEBI:57527"/>
    </ligand>
</feature>
<feature type="site" description="Important for catalytic activity" evidence="1">
    <location>
        <position position="118"/>
    </location>
</feature>
<organism>
    <name type="scientific">Mycobacterium bovis (strain ATCC BAA-935 / AF2122/97)</name>
    <dbReference type="NCBI Taxonomy" id="233413"/>
    <lineage>
        <taxon>Bacteria</taxon>
        <taxon>Bacillati</taxon>
        <taxon>Actinomycetota</taxon>
        <taxon>Actinomycetes</taxon>
        <taxon>Mycobacteriales</taxon>
        <taxon>Mycobacteriaceae</taxon>
        <taxon>Mycobacterium</taxon>
        <taxon>Mycobacterium tuberculosis complex</taxon>
    </lineage>
</organism>
<accession>Q7TY88</accession>
<accession>A0A1R3Y1Q5</accession>
<accession>X2BLU2</accession>
<proteinExistence type="inferred from homology"/>